<comment type="similarity">
    <text evidence="1">Belongs to the RemA family.</text>
</comment>
<dbReference type="EMBL" id="AJ965256">
    <property type="protein sequence ID" value="CAI82314.1"/>
    <property type="molecule type" value="Genomic_DNA"/>
</dbReference>
<dbReference type="RefSeq" id="WP_010935846.1">
    <property type="nucleotide sequence ID" value="NC_007356.1"/>
</dbReference>
<dbReference type="SMR" id="Q3ZWD7"/>
<dbReference type="KEGG" id="deh:cbdbA43"/>
<dbReference type="HOGENOM" id="CLU_165326_0_0_0"/>
<dbReference type="Proteomes" id="UP000000433">
    <property type="component" value="Chromosome"/>
</dbReference>
<dbReference type="HAMAP" id="MF_01503">
    <property type="entry name" value="RemA"/>
    <property type="match status" value="1"/>
</dbReference>
<dbReference type="InterPro" id="IPR007169">
    <property type="entry name" value="RemA-like"/>
</dbReference>
<dbReference type="NCBIfam" id="NF003315">
    <property type="entry name" value="PRK04323.1"/>
    <property type="match status" value="1"/>
</dbReference>
<dbReference type="PANTHER" id="PTHR38449:SF1">
    <property type="entry name" value="REGULATORY PROTEIN SSL2874-RELATED"/>
    <property type="match status" value="1"/>
</dbReference>
<dbReference type="PANTHER" id="PTHR38449">
    <property type="entry name" value="REGULATORY PROTEIN TM_1690-RELATED"/>
    <property type="match status" value="1"/>
</dbReference>
<dbReference type="Pfam" id="PF04025">
    <property type="entry name" value="RemA-like"/>
    <property type="match status" value="1"/>
</dbReference>
<sequence length="96" mass="10368">MFIELVHIGFGNILAMNRVIAISPPSSAPIKRIIQESRTKGFLIDMTNGRKTKAVIFTDSGHIVLAALAPETITGRLSISRGGAVKPELVDDKLEL</sequence>
<reference key="1">
    <citation type="journal article" date="2005" name="Nat. Biotechnol.">
        <title>Genome sequence of the chlorinated compound-respiring bacterium Dehalococcoides species strain CBDB1.</title>
        <authorList>
            <person name="Kube M."/>
            <person name="Beck A."/>
            <person name="Zinder S.H."/>
            <person name="Kuhl H."/>
            <person name="Reinhardt R."/>
            <person name="Adrian L."/>
        </authorList>
    </citation>
    <scope>NUCLEOTIDE SEQUENCE [LARGE SCALE GENOMIC DNA]</scope>
    <source>
        <strain>CBDB1</strain>
    </source>
</reference>
<protein>
    <recommendedName>
        <fullName evidence="1">Putative regulatory protein cbdbA43</fullName>
    </recommendedName>
</protein>
<proteinExistence type="inferred from homology"/>
<organism>
    <name type="scientific">Dehalococcoides mccartyi (strain CBDB1)</name>
    <dbReference type="NCBI Taxonomy" id="255470"/>
    <lineage>
        <taxon>Bacteria</taxon>
        <taxon>Bacillati</taxon>
        <taxon>Chloroflexota</taxon>
        <taxon>Dehalococcoidia</taxon>
        <taxon>Dehalococcoidales</taxon>
        <taxon>Dehalococcoidaceae</taxon>
        <taxon>Dehalococcoides</taxon>
    </lineage>
</organism>
<accession>Q3ZWD7</accession>
<gene>
    <name type="ordered locus">cbdbA43</name>
</gene>
<feature type="chain" id="PRO_0000050228" description="Putative regulatory protein cbdbA43">
    <location>
        <begin position="1"/>
        <end position="96"/>
    </location>
</feature>
<evidence type="ECO:0000255" key="1">
    <source>
        <dbReference type="HAMAP-Rule" id="MF_01503"/>
    </source>
</evidence>
<name>Y043_DEHMC</name>